<proteinExistence type="inferred from homology"/>
<accession>A8I9X6</accession>
<evidence type="ECO:0000255" key="1">
    <source>
        <dbReference type="HAMAP-Rule" id="MF_00120"/>
    </source>
</evidence>
<dbReference type="EC" id="6.3.5.7" evidence="1"/>
<dbReference type="EMBL" id="AP009384">
    <property type="protein sequence ID" value="BAF88842.1"/>
    <property type="molecule type" value="Genomic_DNA"/>
</dbReference>
<dbReference type="RefSeq" id="WP_012171368.1">
    <property type="nucleotide sequence ID" value="NC_009937.1"/>
</dbReference>
<dbReference type="SMR" id="A8I9X6"/>
<dbReference type="STRING" id="438753.AZC_2844"/>
<dbReference type="KEGG" id="azc:AZC_2844"/>
<dbReference type="eggNOG" id="COG0154">
    <property type="taxonomic scope" value="Bacteria"/>
</dbReference>
<dbReference type="HOGENOM" id="CLU_009600_0_3_5"/>
<dbReference type="Proteomes" id="UP000000270">
    <property type="component" value="Chromosome"/>
</dbReference>
<dbReference type="GO" id="GO:0030956">
    <property type="term" value="C:glutamyl-tRNA(Gln) amidotransferase complex"/>
    <property type="evidence" value="ECO:0007669"/>
    <property type="project" value="InterPro"/>
</dbReference>
<dbReference type="GO" id="GO:0005524">
    <property type="term" value="F:ATP binding"/>
    <property type="evidence" value="ECO:0007669"/>
    <property type="project" value="UniProtKB-KW"/>
</dbReference>
<dbReference type="GO" id="GO:0050567">
    <property type="term" value="F:glutaminyl-tRNA synthase (glutamine-hydrolyzing) activity"/>
    <property type="evidence" value="ECO:0007669"/>
    <property type="project" value="UniProtKB-UniRule"/>
</dbReference>
<dbReference type="GO" id="GO:0006412">
    <property type="term" value="P:translation"/>
    <property type="evidence" value="ECO:0007669"/>
    <property type="project" value="UniProtKB-UniRule"/>
</dbReference>
<dbReference type="Gene3D" id="3.90.1300.10">
    <property type="entry name" value="Amidase signature (AS) domain"/>
    <property type="match status" value="1"/>
</dbReference>
<dbReference type="HAMAP" id="MF_00120">
    <property type="entry name" value="GatA"/>
    <property type="match status" value="1"/>
</dbReference>
<dbReference type="InterPro" id="IPR000120">
    <property type="entry name" value="Amidase"/>
</dbReference>
<dbReference type="InterPro" id="IPR020556">
    <property type="entry name" value="Amidase_CS"/>
</dbReference>
<dbReference type="InterPro" id="IPR023631">
    <property type="entry name" value="Amidase_dom"/>
</dbReference>
<dbReference type="InterPro" id="IPR036928">
    <property type="entry name" value="AS_sf"/>
</dbReference>
<dbReference type="InterPro" id="IPR004412">
    <property type="entry name" value="GatA"/>
</dbReference>
<dbReference type="NCBIfam" id="TIGR00132">
    <property type="entry name" value="gatA"/>
    <property type="match status" value="1"/>
</dbReference>
<dbReference type="PANTHER" id="PTHR11895:SF151">
    <property type="entry name" value="GLUTAMYL-TRNA(GLN) AMIDOTRANSFERASE SUBUNIT A"/>
    <property type="match status" value="1"/>
</dbReference>
<dbReference type="PANTHER" id="PTHR11895">
    <property type="entry name" value="TRANSAMIDASE"/>
    <property type="match status" value="1"/>
</dbReference>
<dbReference type="Pfam" id="PF01425">
    <property type="entry name" value="Amidase"/>
    <property type="match status" value="1"/>
</dbReference>
<dbReference type="SUPFAM" id="SSF75304">
    <property type="entry name" value="Amidase signature (AS) enzymes"/>
    <property type="match status" value="1"/>
</dbReference>
<dbReference type="PROSITE" id="PS00571">
    <property type="entry name" value="AMIDASES"/>
    <property type="match status" value="1"/>
</dbReference>
<comment type="function">
    <text evidence="1">Allows the formation of correctly charged Gln-tRNA(Gln) through the transamidation of misacylated Glu-tRNA(Gln) in organisms which lack glutaminyl-tRNA synthetase. The reaction takes place in the presence of glutamine and ATP through an activated gamma-phospho-Glu-tRNA(Gln).</text>
</comment>
<comment type="catalytic activity">
    <reaction evidence="1">
        <text>L-glutamyl-tRNA(Gln) + L-glutamine + ATP + H2O = L-glutaminyl-tRNA(Gln) + L-glutamate + ADP + phosphate + H(+)</text>
        <dbReference type="Rhea" id="RHEA:17521"/>
        <dbReference type="Rhea" id="RHEA-COMP:9681"/>
        <dbReference type="Rhea" id="RHEA-COMP:9684"/>
        <dbReference type="ChEBI" id="CHEBI:15377"/>
        <dbReference type="ChEBI" id="CHEBI:15378"/>
        <dbReference type="ChEBI" id="CHEBI:29985"/>
        <dbReference type="ChEBI" id="CHEBI:30616"/>
        <dbReference type="ChEBI" id="CHEBI:43474"/>
        <dbReference type="ChEBI" id="CHEBI:58359"/>
        <dbReference type="ChEBI" id="CHEBI:78520"/>
        <dbReference type="ChEBI" id="CHEBI:78521"/>
        <dbReference type="ChEBI" id="CHEBI:456216"/>
        <dbReference type="EC" id="6.3.5.7"/>
    </reaction>
</comment>
<comment type="subunit">
    <text evidence="1">Heterotrimer of A, B and C subunits.</text>
</comment>
<comment type="similarity">
    <text evidence="1">Belongs to the amidase family. GatA subfamily.</text>
</comment>
<gene>
    <name evidence="1" type="primary">gatA</name>
    <name type="ordered locus">AZC_2844</name>
</gene>
<keyword id="KW-0067">ATP-binding</keyword>
<keyword id="KW-0436">Ligase</keyword>
<keyword id="KW-0547">Nucleotide-binding</keyword>
<keyword id="KW-0648">Protein biosynthesis</keyword>
<keyword id="KW-1185">Reference proteome</keyword>
<name>GATA_AZOC5</name>
<protein>
    <recommendedName>
        <fullName evidence="1">Glutamyl-tRNA(Gln) amidotransferase subunit A</fullName>
        <shortName evidence="1">Glu-ADT subunit A</shortName>
        <ecNumber evidence="1">6.3.5.7</ecNumber>
    </recommendedName>
</protein>
<organism>
    <name type="scientific">Azorhizobium caulinodans (strain ATCC 43989 / DSM 5975 / JCM 20966 / LMG 6465 / NBRC 14845 / NCIMB 13405 / ORS 571)</name>
    <dbReference type="NCBI Taxonomy" id="438753"/>
    <lineage>
        <taxon>Bacteria</taxon>
        <taxon>Pseudomonadati</taxon>
        <taxon>Pseudomonadota</taxon>
        <taxon>Alphaproteobacteria</taxon>
        <taxon>Hyphomicrobiales</taxon>
        <taxon>Xanthobacteraceae</taxon>
        <taxon>Azorhizobium</taxon>
    </lineage>
</organism>
<reference key="1">
    <citation type="submission" date="2007-04" db="EMBL/GenBank/DDBJ databases">
        <title>Complete genome sequence of the nitrogen-fixing bacterium Azorhizobium caulinodans ORS571.</title>
        <authorList>
            <person name="Lee K.B."/>
            <person name="Backer P.D."/>
            <person name="Aono T."/>
            <person name="Liu C.T."/>
            <person name="Suzuki S."/>
            <person name="Suzuki T."/>
            <person name="Kaneko T."/>
            <person name="Yamada M."/>
            <person name="Tabata S."/>
            <person name="Kupfer D.M."/>
            <person name="Najar F.Z."/>
            <person name="Wiley G.B."/>
            <person name="Roe B."/>
            <person name="Binnewies T."/>
            <person name="Ussery D."/>
            <person name="Vereecke D."/>
            <person name="Gevers D."/>
            <person name="Holsters M."/>
            <person name="Oyaizu H."/>
        </authorList>
    </citation>
    <scope>NUCLEOTIDE SEQUENCE [LARGE SCALE GENOMIC DNA]</scope>
    <source>
        <strain>ATCC 43989 / DSM 5975 / JCM 20966 / LMG 6465 / NBRC 14845 / NCIMB 13405 / ORS 571</strain>
    </source>
</reference>
<sequence length="493" mass="52503">MTALNQLTLTEAREGLATGEFTAVELTQSYLDAMAEARTLNAYVLETADKALAMAAESDKRIASGDAGKLEGLPIGVKDMFCTDGVRTTAGSKILGDFVPPYESTVTSQLWRDGAVMLGKLNNDEFAMGSSNETSAQGPVVSPWRREGDSAPLVPGGSSGGSAAAVAAFLCAGATGTDTGGSIRQPAAFTGTVGIKPTYGRCSRFGIIAYASSLDQAGPFARTVNDAAVLLRSMAGYDPKDSTSVNRSVPDYEDAVGASIKGKRIGIPREYRVEGLDPEIAGMWEEGAQWLRDAGAEVVDISLPHTKYALPTYYIVAPAEASSNLARYDGVRYGTRVPGRDIIDMYERTRAAGFGPEVRRRIMIGTYVLSAGYYDAYYVKAQKVRTLIKRDFDDVFAQGVDAVLTPATPSPAFGIGEKGSADPVEMYLQDIFTVTVNLAGLPGISVPAGLSCKNLPLGLQLIGRPFEEETLFSLAQVVEEAAGRFPVDDLWWK</sequence>
<feature type="chain" id="PRO_1000071364" description="Glutamyl-tRNA(Gln) amidotransferase subunit A">
    <location>
        <begin position="1"/>
        <end position="493"/>
    </location>
</feature>
<feature type="active site" description="Charge relay system" evidence="1">
    <location>
        <position position="78"/>
    </location>
</feature>
<feature type="active site" description="Charge relay system" evidence="1">
    <location>
        <position position="158"/>
    </location>
</feature>
<feature type="active site" description="Acyl-ester intermediate" evidence="1">
    <location>
        <position position="182"/>
    </location>
</feature>